<organism>
    <name type="scientific">Saccharolobus islandicus (strain Y.N.15.51 / Yellowstone #2)</name>
    <name type="common">Sulfolobus islandicus</name>
    <dbReference type="NCBI Taxonomy" id="419942"/>
    <lineage>
        <taxon>Archaea</taxon>
        <taxon>Thermoproteota</taxon>
        <taxon>Thermoprotei</taxon>
        <taxon>Sulfolobales</taxon>
        <taxon>Sulfolobaceae</taxon>
        <taxon>Saccharolobus</taxon>
    </lineage>
</organism>
<evidence type="ECO:0000255" key="1">
    <source>
        <dbReference type="HAMAP-Rule" id="MF_00256"/>
    </source>
</evidence>
<evidence type="ECO:0000256" key="2">
    <source>
        <dbReference type="SAM" id="MobiDB-lite"/>
    </source>
</evidence>
<evidence type="ECO:0000305" key="3"/>
<gene>
    <name evidence="1" type="primary">rpl15e</name>
    <name type="ordered locus">YN1551_1449</name>
</gene>
<comment type="similarity">
    <text evidence="1">Belongs to the eukaryotic ribosomal protein eL15 family.</text>
</comment>
<feature type="chain" id="PRO_1000204618" description="Large ribosomal subunit protein eL15">
    <location>
        <begin position="1"/>
        <end position="216"/>
    </location>
</feature>
<feature type="region of interest" description="Disordered" evidence="2">
    <location>
        <begin position="170"/>
        <end position="201"/>
    </location>
</feature>
<feature type="compositionally biased region" description="Basic residues" evidence="2">
    <location>
        <begin position="170"/>
        <end position="188"/>
    </location>
</feature>
<feature type="compositionally biased region" description="Basic and acidic residues" evidence="2">
    <location>
        <begin position="189"/>
        <end position="201"/>
    </location>
</feature>
<proteinExistence type="inferred from homology"/>
<keyword id="KW-0687">Ribonucleoprotein</keyword>
<keyword id="KW-0689">Ribosomal protein</keyword>
<sequence>MTLSVYHYIENTWNSEEWKKGVLRQRFIEWRKEPSIVRLAKPTRLNRARSLGYKAKQGFVIVRVRVRRGGLNKPRPNKGRRPKRMGVYGYGPAKGYKWIAEERAARKYPNLEVLGSYYVGEDGLYKYYEIIMVDPSHPVIKNDPNYKWLQDPSNRNRVFRGLTSAGKKARGLRKSKGFKGTVKHKWSRKQKEREEKKRHEASKYYRLQRYDKIPGK</sequence>
<protein>
    <recommendedName>
        <fullName evidence="1">Large ribosomal subunit protein eL15</fullName>
    </recommendedName>
    <alternativeName>
        <fullName evidence="3">50S ribosomal protein L15e</fullName>
    </alternativeName>
</protein>
<accession>C3NHD0</accession>
<reference key="1">
    <citation type="journal article" date="2009" name="Proc. Natl. Acad. Sci. U.S.A.">
        <title>Biogeography of the Sulfolobus islandicus pan-genome.</title>
        <authorList>
            <person name="Reno M.L."/>
            <person name="Held N.L."/>
            <person name="Fields C.J."/>
            <person name="Burke P.V."/>
            <person name="Whitaker R.J."/>
        </authorList>
    </citation>
    <scope>NUCLEOTIDE SEQUENCE [LARGE SCALE GENOMIC DNA]</scope>
    <source>
        <strain>Y.N.15.51 / Yellowstone #2</strain>
    </source>
</reference>
<dbReference type="EMBL" id="CP001404">
    <property type="protein sequence ID" value="ACP48540.1"/>
    <property type="molecule type" value="Genomic_DNA"/>
</dbReference>
<dbReference type="RefSeq" id="WP_012711397.1">
    <property type="nucleotide sequence ID" value="NC_012623.1"/>
</dbReference>
<dbReference type="SMR" id="C3NHD0"/>
<dbReference type="KEGG" id="sin:YN1551_1449"/>
<dbReference type="HOGENOM" id="CLU_080796_1_0_2"/>
<dbReference type="Proteomes" id="UP000006818">
    <property type="component" value="Chromosome"/>
</dbReference>
<dbReference type="GO" id="GO:0022625">
    <property type="term" value="C:cytosolic large ribosomal subunit"/>
    <property type="evidence" value="ECO:0007669"/>
    <property type="project" value="TreeGrafter"/>
</dbReference>
<dbReference type="GO" id="GO:0003723">
    <property type="term" value="F:RNA binding"/>
    <property type="evidence" value="ECO:0007669"/>
    <property type="project" value="TreeGrafter"/>
</dbReference>
<dbReference type="GO" id="GO:0003735">
    <property type="term" value="F:structural constituent of ribosome"/>
    <property type="evidence" value="ECO:0007669"/>
    <property type="project" value="InterPro"/>
</dbReference>
<dbReference type="GO" id="GO:0002181">
    <property type="term" value="P:cytoplasmic translation"/>
    <property type="evidence" value="ECO:0007669"/>
    <property type="project" value="TreeGrafter"/>
</dbReference>
<dbReference type="FunFam" id="3.40.1120.10:FF:000002">
    <property type="entry name" value="50S ribosomal protein L15e"/>
    <property type="match status" value="1"/>
</dbReference>
<dbReference type="Gene3D" id="3.40.1120.10">
    <property type="entry name" value="Ribosomal protein l15e"/>
    <property type="match status" value="1"/>
</dbReference>
<dbReference type="HAMAP" id="MF_00256">
    <property type="entry name" value="Ribosomal_eL15"/>
    <property type="match status" value="1"/>
</dbReference>
<dbReference type="InterPro" id="IPR024794">
    <property type="entry name" value="Rbsml_eL15_core_dom_sf"/>
</dbReference>
<dbReference type="InterPro" id="IPR000439">
    <property type="entry name" value="Ribosomal_eL15"/>
</dbReference>
<dbReference type="InterPro" id="IPR020926">
    <property type="entry name" value="Ribosomal_eL15_arc"/>
</dbReference>
<dbReference type="InterPro" id="IPR020925">
    <property type="entry name" value="Ribosomal_eL15_CS"/>
</dbReference>
<dbReference type="InterPro" id="IPR012678">
    <property type="entry name" value="Ribosomal_uL23/eL15/eS24_sf"/>
</dbReference>
<dbReference type="NCBIfam" id="NF003269">
    <property type="entry name" value="PRK04243.1"/>
    <property type="match status" value="1"/>
</dbReference>
<dbReference type="PANTHER" id="PTHR11847:SF4">
    <property type="entry name" value="LARGE RIBOSOMAL SUBUNIT PROTEIN EL15"/>
    <property type="match status" value="1"/>
</dbReference>
<dbReference type="PANTHER" id="PTHR11847">
    <property type="entry name" value="RIBOSOMAL PROTEIN L15"/>
    <property type="match status" value="1"/>
</dbReference>
<dbReference type="Pfam" id="PF00827">
    <property type="entry name" value="Ribosomal_L15e"/>
    <property type="match status" value="1"/>
</dbReference>
<dbReference type="SMART" id="SM01384">
    <property type="entry name" value="Ribosomal_L15e"/>
    <property type="match status" value="1"/>
</dbReference>
<dbReference type="SUPFAM" id="SSF54189">
    <property type="entry name" value="Ribosomal proteins S24e, L23 and L15e"/>
    <property type="match status" value="1"/>
</dbReference>
<dbReference type="PROSITE" id="PS01194">
    <property type="entry name" value="RIBOSOMAL_L15E"/>
    <property type="match status" value="1"/>
</dbReference>
<name>RL15E_SACI1</name>